<evidence type="ECO:0000255" key="1">
    <source>
        <dbReference type="HAMAP-Rule" id="MF_00238"/>
    </source>
</evidence>
<proteinExistence type="inferred from homology"/>
<reference key="1">
    <citation type="journal article" date="2007" name="PLoS Genet.">
        <title>The complete genome sequence of Yersinia pseudotuberculosis IP31758, the causative agent of Far East scarlet-like fever.</title>
        <authorList>
            <person name="Eppinger M."/>
            <person name="Rosovitz M.J."/>
            <person name="Fricke W.F."/>
            <person name="Rasko D.A."/>
            <person name="Kokorina G."/>
            <person name="Fayolle C."/>
            <person name="Lindler L.E."/>
            <person name="Carniel E."/>
            <person name="Ravel J."/>
        </authorList>
    </citation>
    <scope>NUCLEOTIDE SEQUENCE [LARGE SCALE GENOMIC DNA]</scope>
    <source>
        <strain>IP 31758</strain>
    </source>
</reference>
<name>KCY_YERP3</name>
<gene>
    <name evidence="1" type="primary">cmk</name>
    <name type="ordered locus">YpsIP31758_2581</name>
</gene>
<comment type="catalytic activity">
    <reaction evidence="1">
        <text>CMP + ATP = CDP + ADP</text>
        <dbReference type="Rhea" id="RHEA:11600"/>
        <dbReference type="ChEBI" id="CHEBI:30616"/>
        <dbReference type="ChEBI" id="CHEBI:58069"/>
        <dbReference type="ChEBI" id="CHEBI:60377"/>
        <dbReference type="ChEBI" id="CHEBI:456216"/>
        <dbReference type="EC" id="2.7.4.25"/>
    </reaction>
</comment>
<comment type="catalytic activity">
    <reaction evidence="1">
        <text>dCMP + ATP = dCDP + ADP</text>
        <dbReference type="Rhea" id="RHEA:25094"/>
        <dbReference type="ChEBI" id="CHEBI:30616"/>
        <dbReference type="ChEBI" id="CHEBI:57566"/>
        <dbReference type="ChEBI" id="CHEBI:58593"/>
        <dbReference type="ChEBI" id="CHEBI:456216"/>
        <dbReference type="EC" id="2.7.4.25"/>
    </reaction>
</comment>
<comment type="subcellular location">
    <subcellularLocation>
        <location evidence="1">Cytoplasm</location>
    </subcellularLocation>
</comment>
<comment type="similarity">
    <text evidence="1">Belongs to the cytidylate kinase family. Type 1 subfamily.</text>
</comment>
<protein>
    <recommendedName>
        <fullName evidence="1">Cytidylate kinase</fullName>
        <shortName evidence="1">CK</shortName>
        <ecNumber evidence="1">2.7.4.25</ecNumber>
    </recommendedName>
    <alternativeName>
        <fullName evidence="1">Cytidine monophosphate kinase</fullName>
        <shortName evidence="1">CMP kinase</shortName>
    </alternativeName>
</protein>
<accession>A7FJW8</accession>
<dbReference type="EC" id="2.7.4.25" evidence="1"/>
<dbReference type="EMBL" id="CP000720">
    <property type="protein sequence ID" value="ABS49865.1"/>
    <property type="molecule type" value="Genomic_DNA"/>
</dbReference>
<dbReference type="RefSeq" id="WP_002211324.1">
    <property type="nucleotide sequence ID" value="NC_009708.1"/>
</dbReference>
<dbReference type="SMR" id="A7FJW8"/>
<dbReference type="GeneID" id="57977187"/>
<dbReference type="KEGG" id="ypi:YpsIP31758_2581"/>
<dbReference type="HOGENOM" id="CLU_079959_2_0_6"/>
<dbReference type="Proteomes" id="UP000002412">
    <property type="component" value="Chromosome"/>
</dbReference>
<dbReference type="GO" id="GO:0005829">
    <property type="term" value="C:cytosol"/>
    <property type="evidence" value="ECO:0007669"/>
    <property type="project" value="TreeGrafter"/>
</dbReference>
<dbReference type="GO" id="GO:0005524">
    <property type="term" value="F:ATP binding"/>
    <property type="evidence" value="ECO:0007669"/>
    <property type="project" value="UniProtKB-UniRule"/>
</dbReference>
<dbReference type="GO" id="GO:0036430">
    <property type="term" value="F:CMP kinase activity"/>
    <property type="evidence" value="ECO:0007669"/>
    <property type="project" value="RHEA"/>
</dbReference>
<dbReference type="GO" id="GO:0036431">
    <property type="term" value="F:dCMP kinase activity"/>
    <property type="evidence" value="ECO:0007669"/>
    <property type="project" value="RHEA"/>
</dbReference>
<dbReference type="GO" id="GO:0015949">
    <property type="term" value="P:nucleobase-containing small molecule interconversion"/>
    <property type="evidence" value="ECO:0007669"/>
    <property type="project" value="TreeGrafter"/>
</dbReference>
<dbReference type="GO" id="GO:0006220">
    <property type="term" value="P:pyrimidine nucleotide metabolic process"/>
    <property type="evidence" value="ECO:0007669"/>
    <property type="project" value="UniProtKB-UniRule"/>
</dbReference>
<dbReference type="CDD" id="cd02020">
    <property type="entry name" value="CMPK"/>
    <property type="match status" value="1"/>
</dbReference>
<dbReference type="FunFam" id="3.40.50.300:FF:000262">
    <property type="entry name" value="Cytidylate kinase"/>
    <property type="match status" value="1"/>
</dbReference>
<dbReference type="Gene3D" id="3.40.50.300">
    <property type="entry name" value="P-loop containing nucleotide triphosphate hydrolases"/>
    <property type="match status" value="1"/>
</dbReference>
<dbReference type="HAMAP" id="MF_00238">
    <property type="entry name" value="Cytidyl_kinase_type1"/>
    <property type="match status" value="1"/>
</dbReference>
<dbReference type="InterPro" id="IPR003136">
    <property type="entry name" value="Cytidylate_kin"/>
</dbReference>
<dbReference type="InterPro" id="IPR011994">
    <property type="entry name" value="Cytidylate_kinase_dom"/>
</dbReference>
<dbReference type="InterPro" id="IPR027417">
    <property type="entry name" value="P-loop_NTPase"/>
</dbReference>
<dbReference type="NCBIfam" id="TIGR00017">
    <property type="entry name" value="cmk"/>
    <property type="match status" value="1"/>
</dbReference>
<dbReference type="PANTHER" id="PTHR21299:SF2">
    <property type="entry name" value="CYTIDYLATE KINASE"/>
    <property type="match status" value="1"/>
</dbReference>
<dbReference type="PANTHER" id="PTHR21299">
    <property type="entry name" value="CYTIDYLATE KINASE/PANTOATE-BETA-ALANINE LIGASE"/>
    <property type="match status" value="1"/>
</dbReference>
<dbReference type="Pfam" id="PF02224">
    <property type="entry name" value="Cytidylate_kin"/>
    <property type="match status" value="1"/>
</dbReference>
<dbReference type="SUPFAM" id="SSF52540">
    <property type="entry name" value="P-loop containing nucleoside triphosphate hydrolases"/>
    <property type="match status" value="1"/>
</dbReference>
<keyword id="KW-0067">ATP-binding</keyword>
<keyword id="KW-0963">Cytoplasm</keyword>
<keyword id="KW-0418">Kinase</keyword>
<keyword id="KW-0547">Nucleotide-binding</keyword>
<keyword id="KW-0808">Transferase</keyword>
<organism>
    <name type="scientific">Yersinia pseudotuberculosis serotype O:1b (strain IP 31758)</name>
    <dbReference type="NCBI Taxonomy" id="349747"/>
    <lineage>
        <taxon>Bacteria</taxon>
        <taxon>Pseudomonadati</taxon>
        <taxon>Pseudomonadota</taxon>
        <taxon>Gammaproteobacteria</taxon>
        <taxon>Enterobacterales</taxon>
        <taxon>Yersiniaceae</taxon>
        <taxon>Yersinia</taxon>
    </lineage>
</organism>
<feature type="chain" id="PRO_1000058983" description="Cytidylate kinase">
    <location>
        <begin position="1"/>
        <end position="230"/>
    </location>
</feature>
<feature type="binding site" evidence="1">
    <location>
        <begin position="12"/>
        <end position="20"/>
    </location>
    <ligand>
        <name>ATP</name>
        <dbReference type="ChEBI" id="CHEBI:30616"/>
    </ligand>
</feature>
<sequence length="230" mass="25195">MTAIAPVITVDGPSGAGKGTLCKALAESLNWRLLDSGAIYRVLALAALHHQVDISTEEALVPLAAHLDVRFVSQNGQLQVILEGEDVSNEIRTETVGNTASQAAAFPRVREALLRRQRAFREAPGLIADGRDMGTIVFPDAPVKIFLDASSQERAHRRMLQLQERGFNVNFERLLAEIQERDNRDRNRSVAPLVPAADALVLDSTSMSIEQVIEQALAYAQRILALPLKK</sequence>